<proteinExistence type="inferred from homology"/>
<sequence>MSVLQVLHIPDERLRKVAKPVEEVNAEIQRIVDDMFETMYAEEGIGLAATQVDIHQRIIVIDVSENRNERLVLINPELLEKSGETGIEEGCLSIPEQRALVPRAEKVKIRALDRDGNPFELEADGLLAICIQHEMDHLVGKLFIDYLSPLKQQRIRQKVEKLDRLNARA</sequence>
<accession>A9MN80</accession>
<gene>
    <name evidence="1" type="primary">def</name>
    <name type="ordered locus">SARI_04221</name>
</gene>
<feature type="chain" id="PRO_1000076950" description="Peptide deformylase">
    <location>
        <begin position="1"/>
        <end position="169"/>
    </location>
</feature>
<feature type="active site" evidence="1">
    <location>
        <position position="134"/>
    </location>
</feature>
<feature type="binding site" evidence="1">
    <location>
        <position position="91"/>
    </location>
    <ligand>
        <name>Fe cation</name>
        <dbReference type="ChEBI" id="CHEBI:24875"/>
    </ligand>
</feature>
<feature type="binding site" evidence="1">
    <location>
        <position position="133"/>
    </location>
    <ligand>
        <name>Fe cation</name>
        <dbReference type="ChEBI" id="CHEBI:24875"/>
    </ligand>
</feature>
<feature type="binding site" evidence="1">
    <location>
        <position position="137"/>
    </location>
    <ligand>
        <name>Fe cation</name>
        <dbReference type="ChEBI" id="CHEBI:24875"/>
    </ligand>
</feature>
<keyword id="KW-0378">Hydrolase</keyword>
<keyword id="KW-0408">Iron</keyword>
<keyword id="KW-0479">Metal-binding</keyword>
<keyword id="KW-0648">Protein biosynthesis</keyword>
<keyword id="KW-1185">Reference proteome</keyword>
<name>DEF_SALAR</name>
<protein>
    <recommendedName>
        <fullName evidence="1">Peptide deformylase</fullName>
        <shortName evidence="1">PDF</shortName>
        <ecNumber evidence="1">3.5.1.88</ecNumber>
    </recommendedName>
    <alternativeName>
        <fullName evidence="1">Polypeptide deformylase</fullName>
    </alternativeName>
</protein>
<comment type="function">
    <text evidence="1">Removes the formyl group from the N-terminal Met of newly synthesized proteins. Requires at least a dipeptide for an efficient rate of reaction. N-terminal L-methionine is a prerequisite for activity but the enzyme has broad specificity at other positions.</text>
</comment>
<comment type="catalytic activity">
    <reaction evidence="1">
        <text>N-terminal N-formyl-L-methionyl-[peptide] + H2O = N-terminal L-methionyl-[peptide] + formate</text>
        <dbReference type="Rhea" id="RHEA:24420"/>
        <dbReference type="Rhea" id="RHEA-COMP:10639"/>
        <dbReference type="Rhea" id="RHEA-COMP:10640"/>
        <dbReference type="ChEBI" id="CHEBI:15377"/>
        <dbReference type="ChEBI" id="CHEBI:15740"/>
        <dbReference type="ChEBI" id="CHEBI:49298"/>
        <dbReference type="ChEBI" id="CHEBI:64731"/>
        <dbReference type="EC" id="3.5.1.88"/>
    </reaction>
</comment>
<comment type="cofactor">
    <cofactor evidence="1">
        <name>Fe(2+)</name>
        <dbReference type="ChEBI" id="CHEBI:29033"/>
    </cofactor>
    <text evidence="1">Binds 1 Fe(2+) ion.</text>
</comment>
<comment type="similarity">
    <text evidence="1">Belongs to the polypeptide deformylase family.</text>
</comment>
<dbReference type="EC" id="3.5.1.88" evidence="1"/>
<dbReference type="EMBL" id="CP000880">
    <property type="protein sequence ID" value="ABX24010.1"/>
    <property type="molecule type" value="Genomic_DNA"/>
</dbReference>
<dbReference type="BMRB" id="A9MN80"/>
<dbReference type="SMR" id="A9MN80"/>
<dbReference type="STRING" id="41514.SARI_04221"/>
<dbReference type="KEGG" id="ses:SARI_04221"/>
<dbReference type="HOGENOM" id="CLU_061901_2_1_6"/>
<dbReference type="Proteomes" id="UP000002084">
    <property type="component" value="Chromosome"/>
</dbReference>
<dbReference type="GO" id="GO:0046872">
    <property type="term" value="F:metal ion binding"/>
    <property type="evidence" value="ECO:0007669"/>
    <property type="project" value="UniProtKB-KW"/>
</dbReference>
<dbReference type="GO" id="GO:0042586">
    <property type="term" value="F:peptide deformylase activity"/>
    <property type="evidence" value="ECO:0007669"/>
    <property type="project" value="UniProtKB-UniRule"/>
</dbReference>
<dbReference type="GO" id="GO:0043686">
    <property type="term" value="P:co-translational protein modification"/>
    <property type="evidence" value="ECO:0007669"/>
    <property type="project" value="TreeGrafter"/>
</dbReference>
<dbReference type="GO" id="GO:0006412">
    <property type="term" value="P:translation"/>
    <property type="evidence" value="ECO:0007669"/>
    <property type="project" value="UniProtKB-UniRule"/>
</dbReference>
<dbReference type="CDD" id="cd00487">
    <property type="entry name" value="Pep_deformylase"/>
    <property type="match status" value="1"/>
</dbReference>
<dbReference type="FunFam" id="3.90.45.10:FF:000001">
    <property type="entry name" value="Peptide deformylase"/>
    <property type="match status" value="1"/>
</dbReference>
<dbReference type="Gene3D" id="3.90.45.10">
    <property type="entry name" value="Peptide deformylase"/>
    <property type="match status" value="1"/>
</dbReference>
<dbReference type="HAMAP" id="MF_00163">
    <property type="entry name" value="Pep_deformylase"/>
    <property type="match status" value="1"/>
</dbReference>
<dbReference type="InterPro" id="IPR023635">
    <property type="entry name" value="Peptide_deformylase"/>
</dbReference>
<dbReference type="InterPro" id="IPR036821">
    <property type="entry name" value="Peptide_deformylase_sf"/>
</dbReference>
<dbReference type="NCBIfam" id="TIGR00079">
    <property type="entry name" value="pept_deformyl"/>
    <property type="match status" value="1"/>
</dbReference>
<dbReference type="NCBIfam" id="NF001159">
    <property type="entry name" value="PRK00150.1-3"/>
    <property type="match status" value="1"/>
</dbReference>
<dbReference type="PANTHER" id="PTHR10458">
    <property type="entry name" value="PEPTIDE DEFORMYLASE"/>
    <property type="match status" value="1"/>
</dbReference>
<dbReference type="PANTHER" id="PTHR10458:SF21">
    <property type="entry name" value="PEPTIDE DEFORMYLASE"/>
    <property type="match status" value="1"/>
</dbReference>
<dbReference type="Pfam" id="PF01327">
    <property type="entry name" value="Pep_deformylase"/>
    <property type="match status" value="1"/>
</dbReference>
<dbReference type="PIRSF" id="PIRSF004749">
    <property type="entry name" value="Pep_def"/>
    <property type="match status" value="1"/>
</dbReference>
<dbReference type="PRINTS" id="PR01576">
    <property type="entry name" value="PDEFORMYLASE"/>
</dbReference>
<dbReference type="SUPFAM" id="SSF56420">
    <property type="entry name" value="Peptide deformylase"/>
    <property type="match status" value="1"/>
</dbReference>
<evidence type="ECO:0000255" key="1">
    <source>
        <dbReference type="HAMAP-Rule" id="MF_00163"/>
    </source>
</evidence>
<reference key="1">
    <citation type="submission" date="2007-11" db="EMBL/GenBank/DDBJ databases">
        <authorList>
            <consortium name="The Salmonella enterica serovar Arizonae Genome Sequencing Project"/>
            <person name="McClelland M."/>
            <person name="Sanderson E.K."/>
            <person name="Porwollik S."/>
            <person name="Spieth J."/>
            <person name="Clifton W.S."/>
            <person name="Fulton R."/>
            <person name="Chunyan W."/>
            <person name="Wollam A."/>
            <person name="Shah N."/>
            <person name="Pepin K."/>
            <person name="Bhonagiri V."/>
            <person name="Nash W."/>
            <person name="Johnson M."/>
            <person name="Thiruvilangam P."/>
            <person name="Wilson R."/>
        </authorList>
    </citation>
    <scope>NUCLEOTIDE SEQUENCE [LARGE SCALE GENOMIC DNA]</scope>
    <source>
        <strain>ATCC BAA-731 / CDC346-86 / RSK2980</strain>
    </source>
</reference>
<organism>
    <name type="scientific">Salmonella arizonae (strain ATCC BAA-731 / CDC346-86 / RSK2980)</name>
    <dbReference type="NCBI Taxonomy" id="41514"/>
    <lineage>
        <taxon>Bacteria</taxon>
        <taxon>Pseudomonadati</taxon>
        <taxon>Pseudomonadota</taxon>
        <taxon>Gammaproteobacteria</taxon>
        <taxon>Enterobacterales</taxon>
        <taxon>Enterobacteriaceae</taxon>
        <taxon>Salmonella</taxon>
    </lineage>
</organism>